<reference key="1">
    <citation type="submission" date="2007-12" db="EMBL/GenBank/DDBJ databases">
        <title>Complete sequence of chromosome of Francisella philomiragia subsp. philomiragia ATCC 25017.</title>
        <authorList>
            <consortium name="US DOE Joint Genome Institute"/>
            <person name="Copeland A."/>
            <person name="Lucas S."/>
            <person name="Lapidus A."/>
            <person name="Barry K."/>
            <person name="Detter J.C."/>
            <person name="Glavina del Rio T."/>
            <person name="Hammon N."/>
            <person name="Israni S."/>
            <person name="Dalin E."/>
            <person name="Tice H."/>
            <person name="Pitluck S."/>
            <person name="Chain P."/>
            <person name="Malfatti S."/>
            <person name="Shin M."/>
            <person name="Vergez L."/>
            <person name="Schmutz J."/>
            <person name="Larimer F."/>
            <person name="Land M."/>
            <person name="Hauser L."/>
            <person name="Richardson P."/>
        </authorList>
    </citation>
    <scope>NUCLEOTIDE SEQUENCE [LARGE SCALE GENOMIC DNA]</scope>
    <source>
        <strain>ATCC 25017 / CCUG 19701 / FSC 153 / O#319-036</strain>
    </source>
</reference>
<organism>
    <name type="scientific">Francisella philomiragia subsp. philomiragia (strain ATCC 25017 / CCUG 19701 / FSC 153 / O#319-036)</name>
    <dbReference type="NCBI Taxonomy" id="484022"/>
    <lineage>
        <taxon>Bacteria</taxon>
        <taxon>Pseudomonadati</taxon>
        <taxon>Pseudomonadota</taxon>
        <taxon>Gammaproteobacteria</taxon>
        <taxon>Thiotrichales</taxon>
        <taxon>Francisellaceae</taxon>
        <taxon>Francisella</taxon>
    </lineage>
</organism>
<keyword id="KW-0687">Ribonucleoprotein</keyword>
<keyword id="KW-0689">Ribosomal protein</keyword>
<keyword id="KW-0694">RNA-binding</keyword>
<keyword id="KW-0699">rRNA-binding</keyword>
<proteinExistence type="inferred from homology"/>
<evidence type="ECO:0000255" key="1">
    <source>
        <dbReference type="HAMAP-Rule" id="MF_01369"/>
    </source>
</evidence>
<evidence type="ECO:0000305" key="2"/>
<feature type="chain" id="PRO_1000087217" description="Large ribosomal subunit protein uL23">
    <location>
        <begin position="1"/>
        <end position="99"/>
    </location>
</feature>
<comment type="function">
    <text evidence="1">One of the early assembly proteins it binds 23S rRNA. One of the proteins that surrounds the polypeptide exit tunnel on the outside of the ribosome. Forms the main docking site for trigger factor binding to the ribosome.</text>
</comment>
<comment type="subunit">
    <text evidence="1">Part of the 50S ribosomal subunit. Contacts protein L29, and trigger factor when it is bound to the ribosome.</text>
</comment>
<comment type="similarity">
    <text evidence="1">Belongs to the universal ribosomal protein uL23 family.</text>
</comment>
<gene>
    <name evidence="1" type="primary">rplW</name>
    <name type="ordered locus">Fphi_0584</name>
</gene>
<name>RL23_FRAP2</name>
<dbReference type="EMBL" id="CP000937">
    <property type="protein sequence ID" value="ABZ86803.1"/>
    <property type="molecule type" value="Genomic_DNA"/>
</dbReference>
<dbReference type="SMR" id="B0U0Y7"/>
<dbReference type="KEGG" id="fph:Fphi_0584"/>
<dbReference type="eggNOG" id="COG0089">
    <property type="taxonomic scope" value="Bacteria"/>
</dbReference>
<dbReference type="HOGENOM" id="CLU_037562_3_1_6"/>
<dbReference type="GO" id="GO:1990904">
    <property type="term" value="C:ribonucleoprotein complex"/>
    <property type="evidence" value="ECO:0007669"/>
    <property type="project" value="UniProtKB-KW"/>
</dbReference>
<dbReference type="GO" id="GO:0005840">
    <property type="term" value="C:ribosome"/>
    <property type="evidence" value="ECO:0007669"/>
    <property type="project" value="UniProtKB-KW"/>
</dbReference>
<dbReference type="GO" id="GO:0019843">
    <property type="term" value="F:rRNA binding"/>
    <property type="evidence" value="ECO:0007669"/>
    <property type="project" value="UniProtKB-UniRule"/>
</dbReference>
<dbReference type="GO" id="GO:0003735">
    <property type="term" value="F:structural constituent of ribosome"/>
    <property type="evidence" value="ECO:0007669"/>
    <property type="project" value="InterPro"/>
</dbReference>
<dbReference type="GO" id="GO:0006412">
    <property type="term" value="P:translation"/>
    <property type="evidence" value="ECO:0007669"/>
    <property type="project" value="UniProtKB-UniRule"/>
</dbReference>
<dbReference type="FunFam" id="3.30.70.330:FF:000001">
    <property type="entry name" value="50S ribosomal protein L23"/>
    <property type="match status" value="1"/>
</dbReference>
<dbReference type="Gene3D" id="3.30.70.330">
    <property type="match status" value="1"/>
</dbReference>
<dbReference type="HAMAP" id="MF_01369_B">
    <property type="entry name" value="Ribosomal_uL23_B"/>
    <property type="match status" value="1"/>
</dbReference>
<dbReference type="InterPro" id="IPR012677">
    <property type="entry name" value="Nucleotide-bd_a/b_plait_sf"/>
</dbReference>
<dbReference type="InterPro" id="IPR013025">
    <property type="entry name" value="Ribosomal_uL23-like"/>
</dbReference>
<dbReference type="InterPro" id="IPR012678">
    <property type="entry name" value="Ribosomal_uL23/eL15/eS24_sf"/>
</dbReference>
<dbReference type="InterPro" id="IPR001014">
    <property type="entry name" value="Ribosomal_uL23_CS"/>
</dbReference>
<dbReference type="NCBIfam" id="NF004359">
    <property type="entry name" value="PRK05738.1-3"/>
    <property type="match status" value="1"/>
</dbReference>
<dbReference type="NCBIfam" id="NF004363">
    <property type="entry name" value="PRK05738.2-4"/>
    <property type="match status" value="1"/>
</dbReference>
<dbReference type="PANTHER" id="PTHR11620">
    <property type="entry name" value="60S RIBOSOMAL PROTEIN L23A"/>
    <property type="match status" value="1"/>
</dbReference>
<dbReference type="Pfam" id="PF00276">
    <property type="entry name" value="Ribosomal_L23"/>
    <property type="match status" value="1"/>
</dbReference>
<dbReference type="SUPFAM" id="SSF54189">
    <property type="entry name" value="Ribosomal proteins S24e, L23 and L15e"/>
    <property type="match status" value="1"/>
</dbReference>
<dbReference type="PROSITE" id="PS00050">
    <property type="entry name" value="RIBOSOMAL_L23"/>
    <property type="match status" value="1"/>
</dbReference>
<protein>
    <recommendedName>
        <fullName evidence="1">Large ribosomal subunit protein uL23</fullName>
    </recommendedName>
    <alternativeName>
        <fullName evidence="2">50S ribosomal protein L23</fullName>
    </alternativeName>
</protein>
<accession>B0U0Y7</accession>
<sequence>MNSQEKLLKTVVRPHVSDKTYGLSDANSTIVFEVARTATKQDVKSAVEKLFEVKVESVNILNVKGKARRFGRVEGRTKAWKKAYVKLAEGHDINFVGAE</sequence>